<keyword id="KW-1185">Reference proteome</keyword>
<keyword id="KW-0687">Ribonucleoprotein</keyword>
<keyword id="KW-0689">Ribosomal protein</keyword>
<keyword id="KW-0694">RNA-binding</keyword>
<keyword id="KW-0699">rRNA-binding</keyword>
<feature type="chain" id="PRO_1000053038" description="Large ribosomal subunit protein uL18">
    <location>
        <begin position="1"/>
        <end position="120"/>
    </location>
</feature>
<accession>Q0BYD0</accession>
<reference key="1">
    <citation type="journal article" date="2006" name="J. Bacteriol.">
        <title>Comparative genomic evidence for a close relationship between the dimorphic prosthecate bacteria Hyphomonas neptunium and Caulobacter crescentus.</title>
        <authorList>
            <person name="Badger J.H."/>
            <person name="Hoover T.R."/>
            <person name="Brun Y.V."/>
            <person name="Weiner R.M."/>
            <person name="Laub M.T."/>
            <person name="Alexandre G."/>
            <person name="Mrazek J."/>
            <person name="Ren Q."/>
            <person name="Paulsen I.T."/>
            <person name="Nelson K.E."/>
            <person name="Khouri H.M."/>
            <person name="Radune D."/>
            <person name="Sosa J."/>
            <person name="Dodson R.J."/>
            <person name="Sullivan S.A."/>
            <person name="Rosovitz M.J."/>
            <person name="Madupu R."/>
            <person name="Brinkac L.M."/>
            <person name="Durkin A.S."/>
            <person name="Daugherty S.C."/>
            <person name="Kothari S.P."/>
            <person name="Giglio M.G."/>
            <person name="Zhou L."/>
            <person name="Haft D.H."/>
            <person name="Selengut J.D."/>
            <person name="Davidsen T.M."/>
            <person name="Yang Q."/>
            <person name="Zafar N."/>
            <person name="Ward N.L."/>
        </authorList>
    </citation>
    <scope>NUCLEOTIDE SEQUENCE [LARGE SCALE GENOMIC DNA]</scope>
    <source>
        <strain>ATCC 15444</strain>
    </source>
</reference>
<dbReference type="EMBL" id="CP000158">
    <property type="protein sequence ID" value="ABI76455.1"/>
    <property type="molecule type" value="Genomic_DNA"/>
</dbReference>
<dbReference type="RefSeq" id="WP_011647810.1">
    <property type="nucleotide sequence ID" value="NC_008358.1"/>
</dbReference>
<dbReference type="SMR" id="Q0BYD0"/>
<dbReference type="STRING" id="228405.HNE_2835"/>
<dbReference type="KEGG" id="hne:HNE_2835"/>
<dbReference type="eggNOG" id="COG0256">
    <property type="taxonomic scope" value="Bacteria"/>
</dbReference>
<dbReference type="HOGENOM" id="CLU_098841_0_1_5"/>
<dbReference type="Proteomes" id="UP000001959">
    <property type="component" value="Chromosome"/>
</dbReference>
<dbReference type="GO" id="GO:0022625">
    <property type="term" value="C:cytosolic large ribosomal subunit"/>
    <property type="evidence" value="ECO:0007669"/>
    <property type="project" value="TreeGrafter"/>
</dbReference>
<dbReference type="GO" id="GO:0008097">
    <property type="term" value="F:5S rRNA binding"/>
    <property type="evidence" value="ECO:0007669"/>
    <property type="project" value="TreeGrafter"/>
</dbReference>
<dbReference type="GO" id="GO:0003735">
    <property type="term" value="F:structural constituent of ribosome"/>
    <property type="evidence" value="ECO:0007669"/>
    <property type="project" value="InterPro"/>
</dbReference>
<dbReference type="GO" id="GO:0006412">
    <property type="term" value="P:translation"/>
    <property type="evidence" value="ECO:0007669"/>
    <property type="project" value="UniProtKB-UniRule"/>
</dbReference>
<dbReference type="CDD" id="cd00432">
    <property type="entry name" value="Ribosomal_L18_L5e"/>
    <property type="match status" value="1"/>
</dbReference>
<dbReference type="FunFam" id="3.30.420.100:FF:000001">
    <property type="entry name" value="50S ribosomal protein L18"/>
    <property type="match status" value="1"/>
</dbReference>
<dbReference type="Gene3D" id="3.30.420.100">
    <property type="match status" value="1"/>
</dbReference>
<dbReference type="HAMAP" id="MF_01337_B">
    <property type="entry name" value="Ribosomal_uL18_B"/>
    <property type="match status" value="1"/>
</dbReference>
<dbReference type="InterPro" id="IPR004389">
    <property type="entry name" value="Ribosomal_uL18_bac-type"/>
</dbReference>
<dbReference type="InterPro" id="IPR005484">
    <property type="entry name" value="Ribosomal_uL18_bac/euk"/>
</dbReference>
<dbReference type="NCBIfam" id="TIGR00060">
    <property type="entry name" value="L18_bact"/>
    <property type="match status" value="1"/>
</dbReference>
<dbReference type="PANTHER" id="PTHR12899">
    <property type="entry name" value="39S RIBOSOMAL PROTEIN L18, MITOCHONDRIAL"/>
    <property type="match status" value="1"/>
</dbReference>
<dbReference type="PANTHER" id="PTHR12899:SF3">
    <property type="entry name" value="LARGE RIBOSOMAL SUBUNIT PROTEIN UL18M"/>
    <property type="match status" value="1"/>
</dbReference>
<dbReference type="Pfam" id="PF00861">
    <property type="entry name" value="Ribosomal_L18p"/>
    <property type="match status" value="1"/>
</dbReference>
<dbReference type="SUPFAM" id="SSF53137">
    <property type="entry name" value="Translational machinery components"/>
    <property type="match status" value="1"/>
</dbReference>
<proteinExistence type="inferred from homology"/>
<evidence type="ECO:0000255" key="1">
    <source>
        <dbReference type="HAMAP-Rule" id="MF_01337"/>
    </source>
</evidence>
<evidence type="ECO:0000305" key="2"/>
<comment type="function">
    <text evidence="1">This is one of the proteins that bind and probably mediate the attachment of the 5S RNA into the large ribosomal subunit, where it forms part of the central protuberance.</text>
</comment>
<comment type="subunit">
    <text evidence="1">Part of the 50S ribosomal subunit; part of the 5S rRNA/L5/L18/L25 subcomplex. Contacts the 5S and 23S rRNAs.</text>
</comment>
<comment type="similarity">
    <text evidence="1">Belongs to the universal ribosomal protein uL18 family.</text>
</comment>
<protein>
    <recommendedName>
        <fullName evidence="1">Large ribosomal subunit protein uL18</fullName>
    </recommendedName>
    <alternativeName>
        <fullName evidence="2">50S ribosomal protein L18</fullName>
    </alternativeName>
</protein>
<sequence length="120" mass="13060">MKTSREKLQRRAQRVRTKLRRVAEGRPRLSVSRSHKNISVQIIDDEKGITLASASTLEKEVIASAKSSGNVEAAALVGKAIAERAKKAGVEDVVFDRGGYMFHGRVKALADAAREGGLKF</sequence>
<organism>
    <name type="scientific">Hyphomonas neptunium (strain ATCC 15444)</name>
    <dbReference type="NCBI Taxonomy" id="228405"/>
    <lineage>
        <taxon>Bacteria</taxon>
        <taxon>Pseudomonadati</taxon>
        <taxon>Pseudomonadota</taxon>
        <taxon>Alphaproteobacteria</taxon>
        <taxon>Hyphomonadales</taxon>
        <taxon>Hyphomonadaceae</taxon>
        <taxon>Hyphomonas</taxon>
    </lineage>
</organism>
<name>RL18_HYPNA</name>
<gene>
    <name evidence="1" type="primary">rplR</name>
    <name type="ordered locus">HNE_2835</name>
</gene>